<gene>
    <name evidence="6" type="primary">DAPB3</name>
    <name evidence="5" type="synonym">CRR1</name>
    <name type="ordered locus">At5g52100</name>
    <name type="ORF">MSG15.20</name>
</gene>
<organism>
    <name type="scientific">Arabidopsis thaliana</name>
    <name type="common">Mouse-ear cress</name>
    <dbReference type="NCBI Taxonomy" id="3702"/>
    <lineage>
        <taxon>Eukaryota</taxon>
        <taxon>Viridiplantae</taxon>
        <taxon>Streptophyta</taxon>
        <taxon>Embryophyta</taxon>
        <taxon>Tracheophyta</taxon>
        <taxon>Spermatophyta</taxon>
        <taxon>Magnoliopsida</taxon>
        <taxon>eudicotyledons</taxon>
        <taxon>Gunneridae</taxon>
        <taxon>Pentapetalae</taxon>
        <taxon>rosids</taxon>
        <taxon>malvids</taxon>
        <taxon>Brassicales</taxon>
        <taxon>Brassicaceae</taxon>
        <taxon>Camelineae</taxon>
        <taxon>Arabidopsis</taxon>
    </lineage>
</organism>
<sequence>MAAVNCHFFQLSRHLKPSRPSFSCSASQPSQNNIKVIINGAAKEIGRAAVVAVTKARGMELAGAVDNHFVGEDIGLLCDMEEPLEIPVVSDLTMVLGSISQGKEVGVVIDFTDPSTVYENVKQATAFGMKSVVYVPRIKPETVSALSALCDKATMGCLVAPTLSIGSILLQQAVIMASFHYNNVELVESRPNAADLPSPEAIQIANNISNLGQIYNREDSSTDVQARGQVIGEDGVRVHSMVLPGLPSSTQVYFSSPGDVYTVKHDIIDVRSLMPGLLLAIRKVVRLKNLVYGLEKFL</sequence>
<protein>
    <recommendedName>
        <fullName evidence="6">Dihydrodipicolinate reductase-like protein CRR1, chloroplastic</fullName>
    </recommendedName>
    <alternativeName>
        <fullName evidence="6">4-hydroxy-tetrahydrodipicolinate reductase 3</fullName>
        <shortName>HTPA reductase 3</shortName>
    </alternativeName>
    <alternativeName>
        <fullName evidence="5">Protein CHLORORESPIRATORY REDUCTION 1</fullName>
    </alternativeName>
</protein>
<dbReference type="EMBL" id="AB015478">
    <property type="protein sequence ID" value="BAB11058.1"/>
    <property type="molecule type" value="Genomic_DNA"/>
</dbReference>
<dbReference type="EMBL" id="CP002688">
    <property type="protein sequence ID" value="AED96171.1"/>
    <property type="molecule type" value="Genomic_DNA"/>
</dbReference>
<dbReference type="EMBL" id="AY084406">
    <property type="protein sequence ID" value="AAM60980.1"/>
    <property type="molecule type" value="mRNA"/>
</dbReference>
<dbReference type="EMBL" id="BT030092">
    <property type="protein sequence ID" value="ABN04830.1"/>
    <property type="molecule type" value="mRNA"/>
</dbReference>
<dbReference type="RefSeq" id="NP_200023.1">
    <property type="nucleotide sequence ID" value="NM_124589.3"/>
</dbReference>
<dbReference type="SMR" id="Q9FJ82"/>
<dbReference type="BioGRID" id="20531">
    <property type="interactions" value="1"/>
</dbReference>
<dbReference type="FunCoup" id="Q9FJ82">
    <property type="interactions" value="631"/>
</dbReference>
<dbReference type="STRING" id="3702.Q9FJ82"/>
<dbReference type="PaxDb" id="3702-AT5G52100.1"/>
<dbReference type="ProteomicsDB" id="224603"/>
<dbReference type="EnsemblPlants" id="AT5G52100.1">
    <property type="protein sequence ID" value="AT5G52100.1"/>
    <property type="gene ID" value="AT5G52100"/>
</dbReference>
<dbReference type="GeneID" id="835286"/>
<dbReference type="Gramene" id="AT5G52100.1">
    <property type="protein sequence ID" value="AT5G52100.1"/>
    <property type="gene ID" value="AT5G52100"/>
</dbReference>
<dbReference type="KEGG" id="ath:AT5G52100"/>
<dbReference type="Araport" id="AT5G52100"/>
<dbReference type="TAIR" id="AT5G52100">
    <property type="gene designation" value="CRR1"/>
</dbReference>
<dbReference type="eggNOG" id="ENOG502QTU5">
    <property type="taxonomic scope" value="Eukaryota"/>
</dbReference>
<dbReference type="HOGENOM" id="CLU_047479_0_0_1"/>
<dbReference type="InParanoid" id="Q9FJ82"/>
<dbReference type="OMA" id="VYVPKIK"/>
<dbReference type="PhylomeDB" id="Q9FJ82"/>
<dbReference type="BioCyc" id="ARA:AT5G52100-MONOMER"/>
<dbReference type="PRO" id="PR:Q9FJ82"/>
<dbReference type="Proteomes" id="UP000006548">
    <property type="component" value="Chromosome 5"/>
</dbReference>
<dbReference type="ExpressionAtlas" id="Q9FJ82">
    <property type="expression patterns" value="baseline and differential"/>
</dbReference>
<dbReference type="GO" id="GO:0009507">
    <property type="term" value="C:chloroplast"/>
    <property type="evidence" value="ECO:0007005"/>
    <property type="project" value="TAIR"/>
</dbReference>
<dbReference type="GO" id="GO:0009570">
    <property type="term" value="C:chloroplast stroma"/>
    <property type="evidence" value="ECO:0000314"/>
    <property type="project" value="TAIR"/>
</dbReference>
<dbReference type="GO" id="GO:0008839">
    <property type="term" value="F:4-hydroxy-tetrahydrodipicolinate reductase"/>
    <property type="evidence" value="ECO:0007669"/>
    <property type="project" value="InterPro"/>
</dbReference>
<dbReference type="GO" id="GO:0019877">
    <property type="term" value="P:diaminopimelate biosynthetic process"/>
    <property type="evidence" value="ECO:0007669"/>
    <property type="project" value="UniProtKB-KW"/>
</dbReference>
<dbReference type="GO" id="GO:0009089">
    <property type="term" value="P:lysine biosynthetic process via diaminopimelate"/>
    <property type="evidence" value="ECO:0007669"/>
    <property type="project" value="InterPro"/>
</dbReference>
<dbReference type="GO" id="GO:0019684">
    <property type="term" value="P:photosynthesis, light reaction"/>
    <property type="evidence" value="ECO:0000315"/>
    <property type="project" value="TAIR"/>
</dbReference>
<dbReference type="FunFam" id="3.40.50.720:FF:000286">
    <property type="entry name" value="Dihydrodipicolinate reductase family protein"/>
    <property type="match status" value="1"/>
</dbReference>
<dbReference type="FunFam" id="3.30.360.10:FF:000074">
    <property type="entry name" value="Dihydrodipicolinate reductase, C-terminus family protein, expressed"/>
    <property type="match status" value="1"/>
</dbReference>
<dbReference type="Gene3D" id="3.40.50.720">
    <property type="entry name" value="NAD(P)-binding Rossmann-like Domain"/>
    <property type="match status" value="1"/>
</dbReference>
<dbReference type="InterPro" id="IPR022663">
    <property type="entry name" value="DapB_C"/>
</dbReference>
<dbReference type="InterPro" id="IPR000846">
    <property type="entry name" value="DapB_N"/>
</dbReference>
<dbReference type="InterPro" id="IPR023940">
    <property type="entry name" value="DHDPR_bac"/>
</dbReference>
<dbReference type="InterPro" id="IPR036291">
    <property type="entry name" value="NAD(P)-bd_dom_sf"/>
</dbReference>
<dbReference type="NCBIfam" id="TIGR00036">
    <property type="entry name" value="dapB"/>
    <property type="match status" value="1"/>
</dbReference>
<dbReference type="PANTHER" id="PTHR20836">
    <property type="entry name" value="DIHYDRODIPICOLINATE REDUCTASE"/>
    <property type="match status" value="1"/>
</dbReference>
<dbReference type="PANTHER" id="PTHR20836:SF6">
    <property type="entry name" value="DIHYDRODIPICOLINATE REDUCTASE-LIKE PROTEIN CRR1, CHLOROPLASTIC"/>
    <property type="match status" value="1"/>
</dbReference>
<dbReference type="Pfam" id="PF05173">
    <property type="entry name" value="DapB_C"/>
    <property type="match status" value="1"/>
</dbReference>
<dbReference type="Pfam" id="PF01113">
    <property type="entry name" value="DapB_N"/>
    <property type="match status" value="1"/>
</dbReference>
<dbReference type="PIRSF" id="PIRSF000161">
    <property type="entry name" value="DHPR"/>
    <property type="match status" value="1"/>
</dbReference>
<dbReference type="SUPFAM" id="SSF55347">
    <property type="entry name" value="Glyceraldehyde-3-phosphate dehydrogenase-like, C-terminal domain"/>
    <property type="match status" value="1"/>
</dbReference>
<dbReference type="SUPFAM" id="SSF51735">
    <property type="entry name" value="NAD(P)-binding Rossmann-fold domains"/>
    <property type="match status" value="1"/>
</dbReference>
<keyword id="KW-0028">Amino-acid biosynthesis</keyword>
<keyword id="KW-0143">Chaperone</keyword>
<keyword id="KW-0150">Chloroplast</keyword>
<keyword id="KW-0220">Diaminopimelate biosynthesis</keyword>
<keyword id="KW-0457">Lysine biosynthesis</keyword>
<keyword id="KW-0520">NAD</keyword>
<keyword id="KW-0521">NADP</keyword>
<keyword id="KW-0560">Oxidoreductase</keyword>
<keyword id="KW-0934">Plastid</keyword>
<keyword id="KW-1185">Reference proteome</keyword>
<keyword id="KW-0809">Transit peptide</keyword>
<name>DAPB3_ARATH</name>
<reference key="1">
    <citation type="journal article" date="1998" name="DNA Res.">
        <title>Structural analysis of Arabidopsis thaliana chromosome 5. VII. Sequence features of the regions of 1,013,767 bp covered by sixteen physically assigned P1 and TAC clones.</title>
        <authorList>
            <person name="Nakamura Y."/>
            <person name="Sato S."/>
            <person name="Asamizu E."/>
            <person name="Kaneko T."/>
            <person name="Kotani H."/>
            <person name="Miyajima N."/>
            <person name="Tabata S."/>
        </authorList>
    </citation>
    <scope>NUCLEOTIDE SEQUENCE [LARGE SCALE GENOMIC DNA]</scope>
    <source>
        <strain>cv. Columbia</strain>
    </source>
</reference>
<reference key="2">
    <citation type="journal article" date="2017" name="Plant J.">
        <title>Araport11: a complete reannotation of the Arabidopsis thaliana reference genome.</title>
        <authorList>
            <person name="Cheng C.Y."/>
            <person name="Krishnakumar V."/>
            <person name="Chan A.P."/>
            <person name="Thibaud-Nissen F."/>
            <person name="Schobel S."/>
            <person name="Town C.D."/>
        </authorList>
    </citation>
    <scope>GENOME REANNOTATION</scope>
    <source>
        <strain>cv. Columbia</strain>
    </source>
</reference>
<reference key="3">
    <citation type="submission" date="2002-03" db="EMBL/GenBank/DDBJ databases">
        <title>Full-length cDNA from Arabidopsis thaliana.</title>
        <authorList>
            <person name="Brover V.V."/>
            <person name="Troukhan M.E."/>
            <person name="Alexandrov N.A."/>
            <person name="Lu Y.-P."/>
            <person name="Flavell R.B."/>
            <person name="Feldmann K.A."/>
        </authorList>
    </citation>
    <scope>NUCLEOTIDE SEQUENCE [LARGE SCALE MRNA]</scope>
</reference>
<reference key="4">
    <citation type="submission" date="2007-01" db="EMBL/GenBank/DDBJ databases">
        <title>Arabidopsis ORF clones.</title>
        <authorList>
            <person name="Kim C.J."/>
            <person name="Bautista V.R."/>
            <person name="Chen H."/>
            <person name="De Los Reyes C."/>
            <person name="Wu S.Y."/>
            <person name="Ecker J.R."/>
        </authorList>
    </citation>
    <scope>NUCLEOTIDE SEQUENCE [LARGE SCALE MRNA]</scope>
    <source>
        <strain>cv. Columbia</strain>
    </source>
</reference>
<reference key="5">
    <citation type="journal article" date="2005" name="Biochim. Biophys. Acta">
        <title>Biosynthesis of lysine in plants: evidence for a variant of the known bacterial pathways.</title>
        <authorList>
            <person name="Hudson A.O."/>
            <person name="Bless C."/>
            <person name="Macedo P."/>
            <person name="Chatterjee S.P."/>
            <person name="Singh B.K."/>
            <person name="Gilvarg C."/>
            <person name="Leustek T."/>
        </authorList>
    </citation>
    <scope>FUNCTION</scope>
</reference>
<reference key="6">
    <citation type="journal article" date="2007" name="Plant J.">
        <title>Dihydrodipicolinate reductase-like protein, CRR1, is essential for chloroplast NAD(P)H dehydrogenase in Arabidopsis.</title>
        <authorList>
            <person name="Shimizu H."/>
            <person name="Shikanai T."/>
        </authorList>
    </citation>
    <scope>FUNCTION</scope>
    <scope>SUBCELLULAR LOCATION</scope>
    <scope>TISSUE SPECIFICITY</scope>
    <scope>DISRUPTION PHENOTYPE</scope>
</reference>
<accession>Q9FJ82</accession>
<accession>Q8LG90</accession>
<feature type="transit peptide" description="Chloroplast" evidence="2">
    <location>
        <begin position="1"/>
        <end position="25"/>
    </location>
</feature>
<feature type="chain" id="PRO_0000307184" description="Dihydrodipicolinate reductase-like protein CRR1, chloroplastic">
    <location>
        <begin position="26"/>
        <end position="298"/>
    </location>
</feature>
<feature type="binding site" evidence="1">
    <location>
        <begin position="160"/>
        <end position="163"/>
    </location>
    <ligand>
        <name>NAD(+)</name>
        <dbReference type="ChEBI" id="CHEBI:57540"/>
    </ligand>
</feature>
<feature type="sequence conflict" description="In Ref. 3; AAM60980." evidence="6" ref="3">
    <location>
        <position position="106"/>
    </location>
</feature>
<proteinExistence type="evidence at transcript level"/>
<comment type="function">
    <text evidence="3 4">Dihydrodipicolinate reductase (DHPR)-like protein that may not function as DHPR in lysine biosynthesis (PubMed:15652176, PubMed:17727612). Required for both formation and activity of the chloroplast NAD(P)H dehydrogenase (NDH) complex of the photosynthetic electron transport chain. May function in assembly or stabilization of the NDH complex (PubMed:17727612).</text>
</comment>
<comment type="subcellular location">
    <subcellularLocation>
        <location evidence="4">Plastid</location>
        <location evidence="4">Chloroplast stroma</location>
    </subcellularLocation>
</comment>
<comment type="tissue specificity">
    <text evidence="4">Expressed specifically in leaves.</text>
</comment>
<comment type="disruption phenotype">
    <text evidence="4">Impaired chloroplastic NAD(P)H dehydrogenase (NDH) activity, probably due to a reduced stability of the NDH complex.</text>
</comment>
<comment type="miscellaneous">
    <text evidence="3">Unlike DAPB1 and DAPB2, DAPB3 is unable to complement an E.coli dapB strain.</text>
</comment>
<comment type="similarity">
    <text evidence="6">Belongs to the DapB family.</text>
</comment>
<evidence type="ECO:0000250" key="1"/>
<evidence type="ECO:0000255" key="2"/>
<evidence type="ECO:0000269" key="3">
    <source>
    </source>
</evidence>
<evidence type="ECO:0000269" key="4">
    <source>
    </source>
</evidence>
<evidence type="ECO:0000303" key="5">
    <source>
    </source>
</evidence>
<evidence type="ECO:0000305" key="6"/>